<dbReference type="EMBL" id="BC079298">
    <property type="protein sequence ID" value="AAH79298.1"/>
    <property type="molecule type" value="mRNA"/>
</dbReference>
<dbReference type="RefSeq" id="NP_001017475.1">
    <property type="nucleotide sequence ID" value="NM_001017475.1"/>
</dbReference>
<dbReference type="SMR" id="Q68FV4"/>
<dbReference type="STRING" id="10116.ENSRNOP00000071516"/>
<dbReference type="PhosphoSitePlus" id="Q68FV4"/>
<dbReference type="PaxDb" id="10116-ENSRNOP00000059409"/>
<dbReference type="Ensembl" id="ENSRNOT00000092506.2">
    <property type="protein sequence ID" value="ENSRNOP00000075824.2"/>
    <property type="gene ID" value="ENSRNOG00000058939.3"/>
</dbReference>
<dbReference type="GeneID" id="497938"/>
<dbReference type="KEGG" id="rno:497938"/>
<dbReference type="UCSC" id="RGD:1565061">
    <property type="organism name" value="rat"/>
</dbReference>
<dbReference type="AGR" id="RGD:1565061"/>
<dbReference type="CTD" id="201243"/>
<dbReference type="RGD" id="1565061">
    <property type="gene designation" value="Spem2"/>
</dbReference>
<dbReference type="eggNOG" id="ENOG502RKNT">
    <property type="taxonomic scope" value="Eukaryota"/>
</dbReference>
<dbReference type="GeneTree" id="ENSGT00510000049558"/>
<dbReference type="HOGENOM" id="CLU_045547_0_0_1"/>
<dbReference type="InParanoid" id="Q68FV4"/>
<dbReference type="OMA" id="DVHIHCT"/>
<dbReference type="OrthoDB" id="9450448at2759"/>
<dbReference type="PhylomeDB" id="Q68FV4"/>
<dbReference type="TreeFam" id="TF337389"/>
<dbReference type="PRO" id="PR:Q68FV4"/>
<dbReference type="Proteomes" id="UP000002494">
    <property type="component" value="Chromosome 10"/>
</dbReference>
<dbReference type="Bgee" id="ENSRNOG00000058939">
    <property type="expression patterns" value="Expressed in testis and 7 other cell types or tissues"/>
</dbReference>
<dbReference type="ExpressionAtlas" id="Q68FV4">
    <property type="expression patterns" value="baseline"/>
</dbReference>
<dbReference type="GO" id="GO:0016020">
    <property type="term" value="C:membrane"/>
    <property type="evidence" value="ECO:0007669"/>
    <property type="project" value="UniProtKB-SubCell"/>
</dbReference>
<dbReference type="InterPro" id="IPR031368">
    <property type="entry name" value="SPEM1_N"/>
</dbReference>
<dbReference type="PANTHER" id="PTHR34834:SF2">
    <property type="entry name" value="SPEM FAMILY MEMBER 2"/>
    <property type="match status" value="1"/>
</dbReference>
<dbReference type="PANTHER" id="PTHR34834">
    <property type="entry name" value="SPERMATID MATURATION PROTEIN 1"/>
    <property type="match status" value="1"/>
</dbReference>
<dbReference type="Pfam" id="PF15670">
    <property type="entry name" value="Spem1"/>
    <property type="match status" value="1"/>
</dbReference>
<keyword id="KW-0472">Membrane</keyword>
<keyword id="KW-1185">Reference proteome</keyword>
<keyword id="KW-0812">Transmembrane</keyword>
<keyword id="KW-1133">Transmembrane helix</keyword>
<sequence length="504" mass="56915">MENQLWQSTLGCCSQYQESPQDAENILFLLLGLIILVNISINVTTVIWHGLQNAIDKMFSRMHQKTAEVQVTECPPKEPQPANVQDVHIHCVLDPVQVKMAQPTQCSSSSTHYFRKHSNDRRSRRRYCYPRGSLQIRQSNQQQSCHSRQQRLRNNRQFSHGYPPFRKQRQSHKASQTRPMPFFDLEDRDSLLEDDQSCPHPKQPRRSRGGLYKPVRLASNAGLWGRQGGILASLPLPSLYLSPEMRRLPKRVEAKSELRLQGFGPHYSQSRICGNVEAEQWASSPPPPRRLLPNPSWVTVGYSPFPSGGHIPYDARDQWRRGTEGCEPPPAFVSRNLRSDAQGYRDHSSSQAHRQNFPSYTHSQPNHSPPQSVGYSSRESHEVRRRAPDWSEAFPSRHPLTTSTSLTALGEASYQRAPTASSGLVIPHSSQRLAEGQISDPTPPATTFVPLSRNPGGNANYQVYDSLELKRQVQENRGRASSLPPPSTSASRPSLHRSRTGKLN</sequence>
<protein>
    <recommendedName>
        <fullName>Uncharacterized protein SPEM2</fullName>
    </recommendedName>
</protein>
<name>SPEM2_RAT</name>
<accession>Q68FV4</accession>
<comment type="subcellular location">
    <subcellularLocation>
        <location evidence="4">Membrane</location>
        <topology evidence="4">Single-pass membrane protein</topology>
    </subcellularLocation>
</comment>
<proteinExistence type="evidence at transcript level"/>
<gene>
    <name evidence="1" type="primary">Spem2</name>
</gene>
<organism>
    <name type="scientific">Rattus norvegicus</name>
    <name type="common">Rat</name>
    <dbReference type="NCBI Taxonomy" id="10116"/>
    <lineage>
        <taxon>Eukaryota</taxon>
        <taxon>Metazoa</taxon>
        <taxon>Chordata</taxon>
        <taxon>Craniata</taxon>
        <taxon>Vertebrata</taxon>
        <taxon>Euteleostomi</taxon>
        <taxon>Mammalia</taxon>
        <taxon>Eutheria</taxon>
        <taxon>Euarchontoglires</taxon>
        <taxon>Glires</taxon>
        <taxon>Rodentia</taxon>
        <taxon>Myomorpha</taxon>
        <taxon>Muroidea</taxon>
        <taxon>Muridae</taxon>
        <taxon>Murinae</taxon>
        <taxon>Rattus</taxon>
    </lineage>
</organism>
<evidence type="ECO:0000250" key="1">
    <source>
        <dbReference type="UniProtKB" id="Q0P670"/>
    </source>
</evidence>
<evidence type="ECO:0000255" key="2"/>
<evidence type="ECO:0000256" key="3">
    <source>
        <dbReference type="SAM" id="MobiDB-lite"/>
    </source>
</evidence>
<evidence type="ECO:0000305" key="4"/>
<feature type="chain" id="PRO_0000387571" description="Uncharacterized protein SPEM2">
    <location>
        <begin position="1"/>
        <end position="504"/>
    </location>
</feature>
<feature type="transmembrane region" description="Helical" evidence="2">
    <location>
        <begin position="26"/>
        <end position="46"/>
    </location>
</feature>
<feature type="region of interest" description="Disordered" evidence="3">
    <location>
        <begin position="103"/>
        <end position="180"/>
    </location>
</feature>
<feature type="region of interest" description="Disordered" evidence="3">
    <location>
        <begin position="313"/>
        <end position="402"/>
    </location>
</feature>
<feature type="region of interest" description="Disordered" evidence="3">
    <location>
        <begin position="431"/>
        <end position="504"/>
    </location>
</feature>
<feature type="compositionally biased region" description="Polar residues" evidence="3">
    <location>
        <begin position="103"/>
        <end position="112"/>
    </location>
</feature>
<feature type="compositionally biased region" description="Basic residues" evidence="3">
    <location>
        <begin position="113"/>
        <end position="128"/>
    </location>
</feature>
<feature type="compositionally biased region" description="Polar residues" evidence="3">
    <location>
        <begin position="135"/>
        <end position="147"/>
    </location>
</feature>
<feature type="compositionally biased region" description="Basic and acidic residues" evidence="3">
    <location>
        <begin position="313"/>
        <end position="324"/>
    </location>
</feature>
<feature type="compositionally biased region" description="Polar residues" evidence="3">
    <location>
        <begin position="349"/>
        <end position="377"/>
    </location>
</feature>
<feature type="compositionally biased region" description="Basic and acidic residues" evidence="3">
    <location>
        <begin position="378"/>
        <end position="389"/>
    </location>
</feature>
<feature type="compositionally biased region" description="Basic and acidic residues" evidence="3">
    <location>
        <begin position="467"/>
        <end position="478"/>
    </location>
</feature>
<feature type="compositionally biased region" description="Basic residues" evidence="3">
    <location>
        <begin position="494"/>
        <end position="504"/>
    </location>
</feature>
<reference key="1">
    <citation type="journal article" date="2004" name="Genome Res.">
        <title>The status, quality, and expansion of the NIH full-length cDNA project: the Mammalian Gene Collection (MGC).</title>
        <authorList>
            <consortium name="The MGC Project Team"/>
        </authorList>
    </citation>
    <scope>NUCLEOTIDE SEQUENCE [LARGE SCALE MRNA]</scope>
    <source>
        <tissue>Testis</tissue>
    </source>
</reference>